<name>T3RH_HAEIN</name>
<comment type="function">
    <text evidence="3 4">A type III restriction enzyme that recognizes 2 inversely oriented double-stranded sequences 5'-CGAAT-3' and cleaves 25-27 base pairs downstream. After binding to one recognition site undergoes random one-dimensional diffusion along DNA until it collides with a stationary enzyme bound to the second DNA site, which is when DNA cleavage occurs. DNA restriction requires both the Res and Mod subunits (By similarity).</text>
</comment>
<comment type="catalytic activity">
    <reaction>
        <text>Endonucleolytic cleavage of DNA to give specific double-stranded fragments with terminal 5'-phosphates.</text>
        <dbReference type="EC" id="3.1.21.5"/>
    </reaction>
</comment>
<comment type="cofactor">
    <cofactor evidence="1">
        <name>Mg(2+)</name>
        <dbReference type="ChEBI" id="CHEBI:18420"/>
    </cofactor>
</comment>
<comment type="cofactor">
    <cofactor evidence="2">
        <name>S-adenosyl-L-methionine</name>
        <dbReference type="ChEBI" id="CHEBI:59789"/>
    </cofactor>
</comment>
<comment type="subunit">
    <text evidence="3">Contains two different subunits: Res and Mod.</text>
</comment>
<comment type="domain">
    <text evidence="2">Has a helicase-type domain in its N-terminus and an endonuclease-type domain in its C-terminus.</text>
</comment>
<comment type="similarity">
    <text evidence="5">Belongs to the type III restriction-modification system Res protein family.</text>
</comment>
<protein>
    <recommendedName>
        <fullName evidence="4">Probable type III restriction-modification enzyme HindVIP Res subunit</fullName>
        <ecNumber>3.1.21.5</ecNumber>
    </recommendedName>
    <alternativeName>
        <fullName evidence="4">Probable type III restriction enzyme HindVIP</fullName>
    </alternativeName>
</protein>
<sequence>MRSIKRRKKMANDKTLFDWVEDRKSTLEEMEQTDFFALPEFVERNLKYPFFEWQKSALENFLIFDRTSKLKDFPDIKNRPTHLLFNMATGAGKTMMMAALILYYFEKGYRHFLFFVNQNNIVDKTENNFTDPTHAKFLFTEKILQGDTVIPIRKVETFSPHSDGIEIKFTSIQKLYNDIHTEQENQTTLTDLHDLNLVMLGDEAHHLNAQTKGKKQGELDLEKEMNDRTSKAEIERKGWEHMVLELLLNKNGNPSENVLLEFTATLPENAEVQQKYADKIITKFGLKEFLQKGYTKEINLVSSTLGKKERVLHALLFAWYRHQIALKYGIANFKPVMLFRSKTIDESKADYLAFLNWVENVQAVDFSFLTTFLASLNDSDNANEQGKTRTEQALKFIQDNKFEFVHLADWVKQNYQKHNVIITNSETNKSKTEKTDSETEKLLNNLEAADNPIRAIFTVDRLTEGWDVLNLFDIVRLYEGQNGGGSNKKSGKSCRHRIRKAVNWSWRALFSICV</sequence>
<reference key="1">
    <citation type="journal article" date="1995" name="Science">
        <title>Whole-genome random sequencing and assembly of Haemophilus influenzae Rd.</title>
        <authorList>
            <person name="Fleischmann R.D."/>
            <person name="Adams M.D."/>
            <person name="White O."/>
            <person name="Clayton R.A."/>
            <person name="Kirkness E.F."/>
            <person name="Kerlavage A.R."/>
            <person name="Bult C.J."/>
            <person name="Tomb J.-F."/>
            <person name="Dougherty B.A."/>
            <person name="Merrick J.M."/>
            <person name="McKenney K."/>
            <person name="Sutton G.G."/>
            <person name="FitzHugh W."/>
            <person name="Fields C.A."/>
            <person name="Gocayne J.D."/>
            <person name="Scott J.D."/>
            <person name="Shirley R."/>
            <person name="Liu L.-I."/>
            <person name="Glodek A."/>
            <person name="Kelley J.M."/>
            <person name="Weidman J.F."/>
            <person name="Phillips C.A."/>
            <person name="Spriggs T."/>
            <person name="Hedblom E."/>
            <person name="Cotton M.D."/>
            <person name="Utterback T.R."/>
            <person name="Hanna M.C."/>
            <person name="Nguyen D.T."/>
            <person name="Saudek D.M."/>
            <person name="Brandon R.C."/>
            <person name="Fine L.D."/>
            <person name="Fritchman J.L."/>
            <person name="Fuhrmann J.L."/>
            <person name="Geoghagen N.S.M."/>
            <person name="Gnehm C.L."/>
            <person name="McDonald L.A."/>
            <person name="Small K.V."/>
            <person name="Fraser C.M."/>
            <person name="Smith H.O."/>
            <person name="Venter J.C."/>
        </authorList>
    </citation>
    <scope>NUCLEOTIDE SEQUENCE [LARGE SCALE GENOMIC DNA]</scope>
    <source>
        <strain>ATCC 51907 / DSM 11121 / KW20 / Rd</strain>
    </source>
</reference>
<reference key="2">
    <citation type="journal article" date="2003" name="Nucleic Acids Res.">
        <title>A nomenclature for restriction enzymes, DNA methyltransferases, homing endonucleases and their genes.</title>
        <authorList>
            <person name="Roberts R.J."/>
            <person name="Belfort M."/>
            <person name="Bestor T."/>
            <person name="Bhagwat A.S."/>
            <person name="Bickle T.A."/>
            <person name="Bitinaite J."/>
            <person name="Blumenthal R.M."/>
            <person name="Degtyarev S.K."/>
            <person name="Dryden D.T."/>
            <person name="Dybvig K."/>
            <person name="Firman K."/>
            <person name="Gromova E.S."/>
            <person name="Gumport R.I."/>
            <person name="Halford S.E."/>
            <person name="Hattman S."/>
            <person name="Heitman J."/>
            <person name="Hornby D.P."/>
            <person name="Janulaitis A."/>
            <person name="Jeltsch A."/>
            <person name="Josephsen J."/>
            <person name="Kiss A."/>
            <person name="Klaenhammer T.R."/>
            <person name="Kobayashi I."/>
            <person name="Kong H."/>
            <person name="Krueger D.H."/>
            <person name="Lacks S."/>
            <person name="Marinus M.G."/>
            <person name="Miyahara M."/>
            <person name="Morgan R.D."/>
            <person name="Murray N.E."/>
            <person name="Nagaraja V."/>
            <person name="Piekarowicz A."/>
            <person name="Pingoud A."/>
            <person name="Raleigh E."/>
            <person name="Rao D.N."/>
            <person name="Reich N."/>
            <person name="Repin V.E."/>
            <person name="Selker E.U."/>
            <person name="Shaw P.C."/>
            <person name="Stein D.C."/>
            <person name="Stoddard B.L."/>
            <person name="Szybalski W."/>
            <person name="Trautner T.A."/>
            <person name="Van Etten J.L."/>
            <person name="Vitor J.M."/>
            <person name="Wilson G.G."/>
            <person name="Xu S.Y."/>
        </authorList>
    </citation>
    <scope>NOMENCLATURE</scope>
</reference>
<evidence type="ECO:0000250" key="1"/>
<evidence type="ECO:0000250" key="2">
    <source>
        <dbReference type="UniProtKB" id="P08764"/>
    </source>
</evidence>
<evidence type="ECO:0000250" key="3">
    <source>
        <dbReference type="UniProtKB" id="Q5ZND2"/>
    </source>
</evidence>
<evidence type="ECO:0000303" key="4">
    <source>
    </source>
</evidence>
<evidence type="ECO:0000305" key="5"/>
<gene>
    <name evidence="4" type="primary">res</name>
    <name type="ordered locus">HI_1055</name>
</gene>
<proteinExistence type="inferred from homology"/>
<organism>
    <name type="scientific">Haemophilus influenzae (strain ATCC 51907 / DSM 11121 / KW20 / Rd)</name>
    <dbReference type="NCBI Taxonomy" id="71421"/>
    <lineage>
        <taxon>Bacteria</taxon>
        <taxon>Pseudomonadati</taxon>
        <taxon>Pseudomonadota</taxon>
        <taxon>Gammaproteobacteria</taxon>
        <taxon>Pasteurellales</taxon>
        <taxon>Pasteurellaceae</taxon>
        <taxon>Haemophilus</taxon>
    </lineage>
</organism>
<feature type="chain" id="PRO_0000077377" description="Probable type III restriction-modification enzyme HindVIP Res subunit">
    <location>
        <begin position="1"/>
        <end position="514"/>
    </location>
</feature>
<accession>P44105</accession>
<keyword id="KW-0067">ATP-binding</keyword>
<keyword id="KW-0238">DNA-binding</keyword>
<keyword id="KW-0255">Endonuclease</keyword>
<keyword id="KW-0347">Helicase</keyword>
<keyword id="KW-0378">Hydrolase</keyword>
<keyword id="KW-0540">Nuclease</keyword>
<keyword id="KW-0547">Nucleotide-binding</keyword>
<keyword id="KW-1185">Reference proteome</keyword>
<keyword id="KW-0680">Restriction system</keyword>
<keyword id="KW-0949">S-adenosyl-L-methionine</keyword>
<dbReference type="EC" id="3.1.21.5"/>
<dbReference type="EMBL" id="L42023">
    <property type="protein sequence ID" value="AAC22720.1"/>
    <property type="molecule type" value="Genomic_DNA"/>
</dbReference>
<dbReference type="PIR" id="F64019">
    <property type="entry name" value="F64019"/>
</dbReference>
<dbReference type="STRING" id="71421.HI_1055"/>
<dbReference type="REBASE" id="203793">
    <property type="entry name" value="Ppe892ORF72P"/>
</dbReference>
<dbReference type="REBASE" id="204713">
    <property type="entry name" value="Bso1395ORF3709P"/>
</dbReference>
<dbReference type="EnsemblBacteria" id="AAC22720">
    <property type="protein sequence ID" value="AAC22720"/>
    <property type="gene ID" value="HI_1055"/>
</dbReference>
<dbReference type="KEGG" id="hin:HI_1055"/>
<dbReference type="eggNOG" id="COG3421">
    <property type="taxonomic scope" value="Bacteria"/>
</dbReference>
<dbReference type="HOGENOM" id="CLU_016957_2_1_6"/>
<dbReference type="PRO" id="PR:P44105"/>
<dbReference type="Proteomes" id="UP000000579">
    <property type="component" value="Chromosome"/>
</dbReference>
<dbReference type="GO" id="GO:0005524">
    <property type="term" value="F:ATP binding"/>
    <property type="evidence" value="ECO:0007669"/>
    <property type="project" value="UniProtKB-KW"/>
</dbReference>
<dbReference type="GO" id="GO:0003677">
    <property type="term" value="F:DNA binding"/>
    <property type="evidence" value="ECO:0007669"/>
    <property type="project" value="UniProtKB-KW"/>
</dbReference>
<dbReference type="GO" id="GO:0004386">
    <property type="term" value="F:helicase activity"/>
    <property type="evidence" value="ECO:0007669"/>
    <property type="project" value="UniProtKB-KW"/>
</dbReference>
<dbReference type="GO" id="GO:0015668">
    <property type="term" value="F:type III site-specific deoxyribonuclease activity"/>
    <property type="evidence" value="ECO:0007669"/>
    <property type="project" value="UniProtKB-EC"/>
</dbReference>
<dbReference type="GO" id="GO:0009307">
    <property type="term" value="P:DNA restriction-modification system"/>
    <property type="evidence" value="ECO:0007669"/>
    <property type="project" value="UniProtKB-KW"/>
</dbReference>
<dbReference type="CDD" id="cd17926">
    <property type="entry name" value="DEXHc_RE"/>
    <property type="match status" value="1"/>
</dbReference>
<dbReference type="Gene3D" id="3.40.50.300">
    <property type="entry name" value="P-loop containing nucleotide triphosphate hydrolases"/>
    <property type="match status" value="2"/>
</dbReference>
<dbReference type="InterPro" id="IPR006935">
    <property type="entry name" value="Helicase/UvrB_N"/>
</dbReference>
<dbReference type="InterPro" id="IPR014001">
    <property type="entry name" value="Helicase_ATP-bd"/>
</dbReference>
<dbReference type="InterPro" id="IPR027417">
    <property type="entry name" value="P-loop_NTPase"/>
</dbReference>
<dbReference type="Pfam" id="PF04851">
    <property type="entry name" value="ResIII"/>
    <property type="match status" value="1"/>
</dbReference>
<dbReference type="SMART" id="SM00487">
    <property type="entry name" value="DEXDc"/>
    <property type="match status" value="1"/>
</dbReference>
<dbReference type="SUPFAM" id="SSF52540">
    <property type="entry name" value="P-loop containing nucleoside triphosphate hydrolases"/>
    <property type="match status" value="1"/>
</dbReference>